<sequence>MKEQKKVFIKTLGCQMNEYDSARMHEVLNEHFDTVKTDDYKDADIILINTCSIREKAQEKVFHELGRWKGIKKTNEDLIIGVGGCVASQEGENIIKRAPFVDLVFGPQTIHRLPEMIKQKQKSQQSQVDISFPEVEKFDYLPEPKAEGAKAYVSIMEGCDKYCSYCVVPYTRGPEVNRPFEDVLAECAILAEQGVKEITLLGQNVNHYLGPMENGQTADLALLIHFIAEIDGIERIRFTTSHPVEFSQNLIDAYATVPELANHLHLPVQHGSDRILINMKRNHTILEFKQKIRKLRAIRPDITISSDFIVGFPGETEEDFQKLLDLVKEINFDQSFSFIYSKRPGTPAADLPDDTPMEVKKDRLKRLQDLLNSNAQIISRQMVGTNQRILVDGTSKKDDNILSGRTENNRVVNFKGDKSLIGQFAMVKITESLPNSLRGELI</sequence>
<organism>
    <name type="scientific">Francisella tularensis subsp. holarctica (strain LVS)</name>
    <dbReference type="NCBI Taxonomy" id="376619"/>
    <lineage>
        <taxon>Bacteria</taxon>
        <taxon>Pseudomonadati</taxon>
        <taxon>Pseudomonadota</taxon>
        <taxon>Gammaproteobacteria</taxon>
        <taxon>Thiotrichales</taxon>
        <taxon>Francisellaceae</taxon>
        <taxon>Francisella</taxon>
    </lineage>
</organism>
<evidence type="ECO:0000255" key="1">
    <source>
        <dbReference type="HAMAP-Rule" id="MF_01864"/>
    </source>
</evidence>
<evidence type="ECO:0000255" key="2">
    <source>
        <dbReference type="PROSITE-ProRule" id="PRU01266"/>
    </source>
</evidence>
<name>MIAB_FRATH</name>
<protein>
    <recommendedName>
        <fullName evidence="1">tRNA-2-methylthio-N(6)-dimethylallyladenosine synthase</fullName>
        <ecNumber evidence="1">2.8.4.3</ecNumber>
    </recommendedName>
    <alternativeName>
        <fullName evidence="1">(Dimethylallyl)adenosine tRNA methylthiotransferase MiaB</fullName>
    </alternativeName>
    <alternativeName>
        <fullName evidence="1">tRNA-i(6)A37 methylthiotransferase</fullName>
    </alternativeName>
</protein>
<feature type="chain" id="PRO_0000374304" description="tRNA-2-methylthio-N(6)-dimethylallyladenosine synthase">
    <location>
        <begin position="1"/>
        <end position="442"/>
    </location>
</feature>
<feature type="domain" description="MTTase N-terminal" evidence="1">
    <location>
        <begin position="5"/>
        <end position="122"/>
    </location>
</feature>
<feature type="domain" description="Radical SAM core" evidence="2">
    <location>
        <begin position="145"/>
        <end position="378"/>
    </location>
</feature>
<feature type="domain" description="TRAM" evidence="1">
    <location>
        <begin position="380"/>
        <end position="442"/>
    </location>
</feature>
<feature type="binding site" evidence="1">
    <location>
        <position position="14"/>
    </location>
    <ligand>
        <name>[4Fe-4S] cluster</name>
        <dbReference type="ChEBI" id="CHEBI:49883"/>
        <label>1</label>
    </ligand>
</feature>
<feature type="binding site" evidence="1">
    <location>
        <position position="51"/>
    </location>
    <ligand>
        <name>[4Fe-4S] cluster</name>
        <dbReference type="ChEBI" id="CHEBI:49883"/>
        <label>1</label>
    </ligand>
</feature>
<feature type="binding site" evidence="1">
    <location>
        <position position="85"/>
    </location>
    <ligand>
        <name>[4Fe-4S] cluster</name>
        <dbReference type="ChEBI" id="CHEBI:49883"/>
        <label>1</label>
    </ligand>
</feature>
<feature type="binding site" evidence="1">
    <location>
        <position position="159"/>
    </location>
    <ligand>
        <name>[4Fe-4S] cluster</name>
        <dbReference type="ChEBI" id="CHEBI:49883"/>
        <label>2</label>
        <note>4Fe-4S-S-AdoMet</note>
    </ligand>
</feature>
<feature type="binding site" evidence="1">
    <location>
        <position position="163"/>
    </location>
    <ligand>
        <name>[4Fe-4S] cluster</name>
        <dbReference type="ChEBI" id="CHEBI:49883"/>
        <label>2</label>
        <note>4Fe-4S-S-AdoMet</note>
    </ligand>
</feature>
<feature type="binding site" evidence="1">
    <location>
        <position position="166"/>
    </location>
    <ligand>
        <name>[4Fe-4S] cluster</name>
        <dbReference type="ChEBI" id="CHEBI:49883"/>
        <label>2</label>
        <note>4Fe-4S-S-AdoMet</note>
    </ligand>
</feature>
<reference key="1">
    <citation type="submission" date="2006-03" db="EMBL/GenBank/DDBJ databases">
        <title>Complete genome sequence of Francisella tularensis LVS (Live Vaccine Strain).</title>
        <authorList>
            <person name="Chain P."/>
            <person name="Larimer F."/>
            <person name="Land M."/>
            <person name="Stilwagen S."/>
            <person name="Larsson P."/>
            <person name="Bearden S."/>
            <person name="Chu M."/>
            <person name="Oyston P."/>
            <person name="Forsman M."/>
            <person name="Andersson S."/>
            <person name="Lindler L."/>
            <person name="Titball R."/>
            <person name="Garcia E."/>
        </authorList>
    </citation>
    <scope>NUCLEOTIDE SEQUENCE [LARGE SCALE GENOMIC DNA]</scope>
    <source>
        <strain>LVS</strain>
    </source>
</reference>
<gene>
    <name evidence="1" type="primary">miaB</name>
    <name type="ordered locus">FTL_0886</name>
</gene>
<proteinExistence type="inferred from homology"/>
<accession>Q2A3U6</accession>
<dbReference type="EC" id="2.8.4.3" evidence="1"/>
<dbReference type="EMBL" id="AM233362">
    <property type="protein sequence ID" value="CAJ79325.1"/>
    <property type="molecule type" value="Genomic_DNA"/>
</dbReference>
<dbReference type="RefSeq" id="WP_003015528.1">
    <property type="nucleotide sequence ID" value="NZ_CP009694.1"/>
</dbReference>
<dbReference type="SMR" id="Q2A3U6"/>
<dbReference type="KEGG" id="ftl:FTL_0886"/>
<dbReference type="Proteomes" id="UP000001944">
    <property type="component" value="Chromosome"/>
</dbReference>
<dbReference type="GO" id="GO:0005829">
    <property type="term" value="C:cytosol"/>
    <property type="evidence" value="ECO:0007669"/>
    <property type="project" value="TreeGrafter"/>
</dbReference>
<dbReference type="GO" id="GO:0051539">
    <property type="term" value="F:4 iron, 4 sulfur cluster binding"/>
    <property type="evidence" value="ECO:0007669"/>
    <property type="project" value="UniProtKB-UniRule"/>
</dbReference>
<dbReference type="GO" id="GO:0046872">
    <property type="term" value="F:metal ion binding"/>
    <property type="evidence" value="ECO:0007669"/>
    <property type="project" value="UniProtKB-KW"/>
</dbReference>
<dbReference type="GO" id="GO:0035597">
    <property type="term" value="F:N6-isopentenyladenosine methylthiotransferase activity"/>
    <property type="evidence" value="ECO:0007669"/>
    <property type="project" value="TreeGrafter"/>
</dbReference>
<dbReference type="CDD" id="cd01335">
    <property type="entry name" value="Radical_SAM"/>
    <property type="match status" value="1"/>
</dbReference>
<dbReference type="FunFam" id="3.40.50.12160:FF:000001">
    <property type="entry name" value="tRNA-2-methylthio-N(6)-dimethylallyladenosine synthase"/>
    <property type="match status" value="1"/>
</dbReference>
<dbReference type="FunFam" id="3.80.30.20:FF:000001">
    <property type="entry name" value="tRNA-2-methylthio-N(6)-dimethylallyladenosine synthase 2"/>
    <property type="match status" value="1"/>
</dbReference>
<dbReference type="Gene3D" id="3.40.50.12160">
    <property type="entry name" value="Methylthiotransferase, N-terminal domain"/>
    <property type="match status" value="1"/>
</dbReference>
<dbReference type="Gene3D" id="3.80.30.20">
    <property type="entry name" value="tm_1862 like domain"/>
    <property type="match status" value="1"/>
</dbReference>
<dbReference type="HAMAP" id="MF_01864">
    <property type="entry name" value="tRNA_metthiotr_MiaB"/>
    <property type="match status" value="1"/>
</dbReference>
<dbReference type="InterPro" id="IPR006638">
    <property type="entry name" value="Elp3/MiaA/NifB-like_rSAM"/>
</dbReference>
<dbReference type="InterPro" id="IPR005839">
    <property type="entry name" value="Methylthiotransferase"/>
</dbReference>
<dbReference type="InterPro" id="IPR020612">
    <property type="entry name" value="Methylthiotransferase_CS"/>
</dbReference>
<dbReference type="InterPro" id="IPR013848">
    <property type="entry name" value="Methylthiotransferase_N"/>
</dbReference>
<dbReference type="InterPro" id="IPR038135">
    <property type="entry name" value="Methylthiotransferase_N_sf"/>
</dbReference>
<dbReference type="InterPro" id="IPR006463">
    <property type="entry name" value="MiaB_methiolase"/>
</dbReference>
<dbReference type="InterPro" id="IPR007197">
    <property type="entry name" value="rSAM"/>
</dbReference>
<dbReference type="InterPro" id="IPR023404">
    <property type="entry name" value="rSAM_horseshoe"/>
</dbReference>
<dbReference type="InterPro" id="IPR002792">
    <property type="entry name" value="TRAM_dom"/>
</dbReference>
<dbReference type="NCBIfam" id="TIGR01574">
    <property type="entry name" value="miaB-methiolase"/>
    <property type="match status" value="1"/>
</dbReference>
<dbReference type="NCBIfam" id="TIGR00089">
    <property type="entry name" value="MiaB/RimO family radical SAM methylthiotransferase"/>
    <property type="match status" value="1"/>
</dbReference>
<dbReference type="PANTHER" id="PTHR43020">
    <property type="entry name" value="CDK5 REGULATORY SUBUNIT-ASSOCIATED PROTEIN 1"/>
    <property type="match status" value="1"/>
</dbReference>
<dbReference type="PANTHER" id="PTHR43020:SF2">
    <property type="entry name" value="MITOCHONDRIAL TRNA METHYLTHIOTRANSFERASE CDK5RAP1"/>
    <property type="match status" value="1"/>
</dbReference>
<dbReference type="Pfam" id="PF04055">
    <property type="entry name" value="Radical_SAM"/>
    <property type="match status" value="1"/>
</dbReference>
<dbReference type="Pfam" id="PF01938">
    <property type="entry name" value="TRAM"/>
    <property type="match status" value="1"/>
</dbReference>
<dbReference type="Pfam" id="PF00919">
    <property type="entry name" value="UPF0004"/>
    <property type="match status" value="1"/>
</dbReference>
<dbReference type="SFLD" id="SFLDF00273">
    <property type="entry name" value="(dimethylallyl)adenosine_tRNA"/>
    <property type="match status" value="1"/>
</dbReference>
<dbReference type="SFLD" id="SFLDG01082">
    <property type="entry name" value="B12-binding_domain_containing"/>
    <property type="match status" value="1"/>
</dbReference>
<dbReference type="SFLD" id="SFLDS00029">
    <property type="entry name" value="Radical_SAM"/>
    <property type="match status" value="1"/>
</dbReference>
<dbReference type="SMART" id="SM00729">
    <property type="entry name" value="Elp3"/>
    <property type="match status" value="1"/>
</dbReference>
<dbReference type="SUPFAM" id="SSF102114">
    <property type="entry name" value="Radical SAM enzymes"/>
    <property type="match status" value="1"/>
</dbReference>
<dbReference type="PROSITE" id="PS51449">
    <property type="entry name" value="MTTASE_N"/>
    <property type="match status" value="1"/>
</dbReference>
<dbReference type="PROSITE" id="PS01278">
    <property type="entry name" value="MTTASE_RADICAL"/>
    <property type="match status" value="1"/>
</dbReference>
<dbReference type="PROSITE" id="PS51918">
    <property type="entry name" value="RADICAL_SAM"/>
    <property type="match status" value="1"/>
</dbReference>
<dbReference type="PROSITE" id="PS50926">
    <property type="entry name" value="TRAM"/>
    <property type="match status" value="1"/>
</dbReference>
<comment type="function">
    <text evidence="1">Catalyzes the methylthiolation of N6-(dimethylallyl)adenosine (i(6)A), leading to the formation of 2-methylthio-N6-(dimethylallyl)adenosine (ms(2)i(6)A) at position 37 in tRNAs that read codons beginning with uridine.</text>
</comment>
<comment type="catalytic activity">
    <reaction evidence="1">
        <text>N(6)-dimethylallyladenosine(37) in tRNA + (sulfur carrier)-SH + AH2 + 2 S-adenosyl-L-methionine = 2-methylsulfanyl-N(6)-dimethylallyladenosine(37) in tRNA + (sulfur carrier)-H + 5'-deoxyadenosine + L-methionine + A + S-adenosyl-L-homocysteine + 2 H(+)</text>
        <dbReference type="Rhea" id="RHEA:37067"/>
        <dbReference type="Rhea" id="RHEA-COMP:10375"/>
        <dbReference type="Rhea" id="RHEA-COMP:10376"/>
        <dbReference type="Rhea" id="RHEA-COMP:14737"/>
        <dbReference type="Rhea" id="RHEA-COMP:14739"/>
        <dbReference type="ChEBI" id="CHEBI:13193"/>
        <dbReference type="ChEBI" id="CHEBI:15378"/>
        <dbReference type="ChEBI" id="CHEBI:17319"/>
        <dbReference type="ChEBI" id="CHEBI:17499"/>
        <dbReference type="ChEBI" id="CHEBI:29917"/>
        <dbReference type="ChEBI" id="CHEBI:57844"/>
        <dbReference type="ChEBI" id="CHEBI:57856"/>
        <dbReference type="ChEBI" id="CHEBI:59789"/>
        <dbReference type="ChEBI" id="CHEBI:64428"/>
        <dbReference type="ChEBI" id="CHEBI:74415"/>
        <dbReference type="ChEBI" id="CHEBI:74417"/>
        <dbReference type="EC" id="2.8.4.3"/>
    </reaction>
</comment>
<comment type="cofactor">
    <cofactor evidence="1">
        <name>[4Fe-4S] cluster</name>
        <dbReference type="ChEBI" id="CHEBI:49883"/>
    </cofactor>
    <text evidence="1">Binds 2 [4Fe-4S] clusters. One cluster is coordinated with 3 cysteines and an exchangeable S-adenosyl-L-methionine.</text>
</comment>
<comment type="subunit">
    <text evidence="1">Monomer.</text>
</comment>
<comment type="subcellular location">
    <subcellularLocation>
        <location evidence="1">Cytoplasm</location>
    </subcellularLocation>
</comment>
<comment type="similarity">
    <text evidence="1">Belongs to the methylthiotransferase family. MiaB subfamily.</text>
</comment>
<keyword id="KW-0004">4Fe-4S</keyword>
<keyword id="KW-0963">Cytoplasm</keyword>
<keyword id="KW-0408">Iron</keyword>
<keyword id="KW-0411">Iron-sulfur</keyword>
<keyword id="KW-0479">Metal-binding</keyword>
<keyword id="KW-1185">Reference proteome</keyword>
<keyword id="KW-0949">S-adenosyl-L-methionine</keyword>
<keyword id="KW-0808">Transferase</keyword>
<keyword id="KW-0819">tRNA processing</keyword>